<reference key="1">
    <citation type="journal article" date="1998" name="Nature">
        <title>The complete genome of the hyperthermophilic bacterium Aquifex aeolicus.</title>
        <authorList>
            <person name="Deckert G."/>
            <person name="Warren P.V."/>
            <person name="Gaasterland T."/>
            <person name="Young W.G."/>
            <person name="Lenox A.L."/>
            <person name="Graham D.E."/>
            <person name="Overbeek R."/>
            <person name="Snead M.A."/>
            <person name="Keller M."/>
            <person name="Aujay M."/>
            <person name="Huber R."/>
            <person name="Feldman R.A."/>
            <person name="Short J.M."/>
            <person name="Olsen G.J."/>
            <person name="Swanson R.V."/>
        </authorList>
    </citation>
    <scope>NUCLEOTIDE SEQUENCE [LARGE SCALE GENOMIC DNA]</scope>
    <source>
        <strain>VF5</strain>
    </source>
</reference>
<protein>
    <recommendedName>
        <fullName evidence="1">RNA-binding protein Hfq</fullName>
    </recommendedName>
</protein>
<accession>O66512</accession>
<sequence length="80" mass="9202">MPYKLQESFLNTARKKRVKVSVYLVNGVRLQGRIRSFDLFTILLEDGKQQTLVYKHAITTIVPHERLEIEFEEAGVPGQG</sequence>
<feature type="chain" id="PRO_0000095612" description="RNA-binding protein Hfq">
    <location>
        <begin position="1"/>
        <end position="80"/>
    </location>
</feature>
<feature type="domain" description="Sm" evidence="2">
    <location>
        <begin position="7"/>
        <end position="67"/>
    </location>
</feature>
<feature type="helix" evidence="3">
    <location>
        <begin position="4"/>
        <end position="16"/>
    </location>
</feature>
<feature type="strand" evidence="3">
    <location>
        <begin position="19"/>
        <end position="24"/>
    </location>
</feature>
<feature type="strand" evidence="3">
    <location>
        <begin position="29"/>
        <end position="37"/>
    </location>
</feature>
<feature type="strand" evidence="3">
    <location>
        <begin position="39"/>
        <end position="46"/>
    </location>
</feature>
<feature type="strand" evidence="3">
    <location>
        <begin position="49"/>
        <end position="54"/>
    </location>
</feature>
<feature type="helix" evidence="3">
    <location>
        <begin position="55"/>
        <end position="57"/>
    </location>
</feature>
<feature type="strand" evidence="3">
    <location>
        <begin position="58"/>
        <end position="65"/>
    </location>
</feature>
<name>HFQ_AQUAE</name>
<gene>
    <name evidence="1" type="primary">hfq</name>
    <name type="ordered locus">aq_108</name>
    <name type="ORF">aq_108B</name>
</gene>
<evidence type="ECO:0000255" key="1">
    <source>
        <dbReference type="HAMAP-Rule" id="MF_00436"/>
    </source>
</evidence>
<evidence type="ECO:0000255" key="2">
    <source>
        <dbReference type="PROSITE-ProRule" id="PRU01346"/>
    </source>
</evidence>
<evidence type="ECO:0007829" key="3">
    <source>
        <dbReference type="PDB" id="5SZD"/>
    </source>
</evidence>
<proteinExistence type="evidence at protein level"/>
<keyword id="KW-0002">3D-structure</keyword>
<keyword id="KW-1185">Reference proteome</keyword>
<keyword id="KW-0694">RNA-binding</keyword>
<keyword id="KW-0346">Stress response</keyword>
<comment type="function">
    <text evidence="1">RNA chaperone that binds small regulatory RNA (sRNAs) and mRNAs to facilitate mRNA translational regulation in response to envelope stress, environmental stress and changes in metabolite concentrations. Also binds with high specificity to tRNAs.</text>
</comment>
<comment type="subunit">
    <text evidence="1">Homohexamer.</text>
</comment>
<comment type="similarity">
    <text evidence="1">Belongs to the Hfq family.</text>
</comment>
<organism>
    <name type="scientific">Aquifex aeolicus (strain VF5)</name>
    <dbReference type="NCBI Taxonomy" id="224324"/>
    <lineage>
        <taxon>Bacteria</taxon>
        <taxon>Pseudomonadati</taxon>
        <taxon>Aquificota</taxon>
        <taxon>Aquificia</taxon>
        <taxon>Aquificales</taxon>
        <taxon>Aquificaceae</taxon>
        <taxon>Aquifex</taxon>
    </lineage>
</organism>
<dbReference type="EMBL" id="AE000657">
    <property type="protein sequence ID" value="AAC06479.1"/>
    <property type="molecule type" value="Genomic_DNA"/>
</dbReference>
<dbReference type="PIR" id="E70310">
    <property type="entry name" value="E70310"/>
</dbReference>
<dbReference type="RefSeq" id="NP_213072.1">
    <property type="nucleotide sequence ID" value="NC_000918.1"/>
</dbReference>
<dbReference type="RefSeq" id="WP_010880010.1">
    <property type="nucleotide sequence ID" value="NC_000918.1"/>
</dbReference>
<dbReference type="PDB" id="5SZD">
    <property type="method" value="X-ray"/>
    <property type="resolution" value="1.49 A"/>
    <property type="chains" value="A/B/C/D/E/F/G/H/I/J/K/L=1-80"/>
</dbReference>
<dbReference type="PDB" id="5SZE">
    <property type="method" value="X-ray"/>
    <property type="resolution" value="1.50 A"/>
    <property type="chains" value="A=1-80"/>
</dbReference>
<dbReference type="PDBsum" id="5SZD"/>
<dbReference type="PDBsum" id="5SZE"/>
<dbReference type="SMR" id="O66512"/>
<dbReference type="FunCoup" id="O66512">
    <property type="interactions" value="189"/>
</dbReference>
<dbReference type="STRING" id="224324.aq_108b"/>
<dbReference type="EnsemblBacteria" id="AAC06479">
    <property type="protein sequence ID" value="AAC06479"/>
    <property type="gene ID" value="aq_108b"/>
</dbReference>
<dbReference type="KEGG" id="aae:aq_108b"/>
<dbReference type="PATRIC" id="fig|224324.8.peg.93"/>
<dbReference type="eggNOG" id="COG1923">
    <property type="taxonomic scope" value="Bacteria"/>
</dbReference>
<dbReference type="HOGENOM" id="CLU_113688_0_2_0"/>
<dbReference type="InParanoid" id="O66512"/>
<dbReference type="OrthoDB" id="9799751at2"/>
<dbReference type="Proteomes" id="UP000000798">
    <property type="component" value="Chromosome"/>
</dbReference>
<dbReference type="GO" id="GO:0005829">
    <property type="term" value="C:cytosol"/>
    <property type="evidence" value="ECO:0000318"/>
    <property type="project" value="GO_Central"/>
</dbReference>
<dbReference type="GO" id="GO:0003723">
    <property type="term" value="F:RNA binding"/>
    <property type="evidence" value="ECO:0000318"/>
    <property type="project" value="GO_Central"/>
</dbReference>
<dbReference type="GO" id="GO:0006355">
    <property type="term" value="P:regulation of DNA-templated transcription"/>
    <property type="evidence" value="ECO:0007669"/>
    <property type="project" value="InterPro"/>
</dbReference>
<dbReference type="GO" id="GO:0043487">
    <property type="term" value="P:regulation of RNA stability"/>
    <property type="evidence" value="ECO:0000318"/>
    <property type="project" value="GO_Central"/>
</dbReference>
<dbReference type="GO" id="GO:0045974">
    <property type="term" value="P:regulation of translation, ncRNA-mediated"/>
    <property type="evidence" value="ECO:0000318"/>
    <property type="project" value="GO_Central"/>
</dbReference>
<dbReference type="CDD" id="cd01716">
    <property type="entry name" value="Hfq"/>
    <property type="match status" value="1"/>
</dbReference>
<dbReference type="Gene3D" id="2.30.30.100">
    <property type="match status" value="1"/>
</dbReference>
<dbReference type="HAMAP" id="MF_00436">
    <property type="entry name" value="Hfq"/>
    <property type="match status" value="1"/>
</dbReference>
<dbReference type="InterPro" id="IPR005001">
    <property type="entry name" value="Hfq"/>
</dbReference>
<dbReference type="InterPro" id="IPR010920">
    <property type="entry name" value="LSM_dom_sf"/>
</dbReference>
<dbReference type="InterPro" id="IPR047575">
    <property type="entry name" value="Sm"/>
</dbReference>
<dbReference type="NCBIfam" id="TIGR02383">
    <property type="entry name" value="Hfq"/>
    <property type="match status" value="1"/>
</dbReference>
<dbReference type="NCBIfam" id="NF001602">
    <property type="entry name" value="PRK00395.1"/>
    <property type="match status" value="1"/>
</dbReference>
<dbReference type="PANTHER" id="PTHR34772">
    <property type="entry name" value="RNA-BINDING PROTEIN HFQ"/>
    <property type="match status" value="1"/>
</dbReference>
<dbReference type="PANTHER" id="PTHR34772:SF1">
    <property type="entry name" value="RNA-BINDING PROTEIN HFQ"/>
    <property type="match status" value="1"/>
</dbReference>
<dbReference type="Pfam" id="PF17209">
    <property type="entry name" value="Hfq"/>
    <property type="match status" value="1"/>
</dbReference>
<dbReference type="SUPFAM" id="SSF50182">
    <property type="entry name" value="Sm-like ribonucleoproteins"/>
    <property type="match status" value="1"/>
</dbReference>
<dbReference type="PROSITE" id="PS52002">
    <property type="entry name" value="SM"/>
    <property type="match status" value="1"/>
</dbReference>